<evidence type="ECO:0000255" key="1"/>
<evidence type="ECO:0000305" key="2"/>
<reference key="1">
    <citation type="journal article" date="1998" name="Nature">
        <title>Deciphering the biology of Mycobacterium tuberculosis from the complete genome sequence.</title>
        <authorList>
            <person name="Cole S.T."/>
            <person name="Brosch R."/>
            <person name="Parkhill J."/>
            <person name="Garnier T."/>
            <person name="Churcher C.M."/>
            <person name="Harris D.E."/>
            <person name="Gordon S.V."/>
            <person name="Eiglmeier K."/>
            <person name="Gas S."/>
            <person name="Barry C.E. III"/>
            <person name="Tekaia F."/>
            <person name="Badcock K."/>
            <person name="Basham D."/>
            <person name="Brown D."/>
            <person name="Chillingworth T."/>
            <person name="Connor R."/>
            <person name="Davies R.M."/>
            <person name="Devlin K."/>
            <person name="Feltwell T."/>
            <person name="Gentles S."/>
            <person name="Hamlin N."/>
            <person name="Holroyd S."/>
            <person name="Hornsby T."/>
            <person name="Jagels K."/>
            <person name="Krogh A."/>
            <person name="McLean J."/>
            <person name="Moule S."/>
            <person name="Murphy L.D."/>
            <person name="Oliver S."/>
            <person name="Osborne J."/>
            <person name="Quail M.A."/>
            <person name="Rajandream M.A."/>
            <person name="Rogers J."/>
            <person name="Rutter S."/>
            <person name="Seeger K."/>
            <person name="Skelton S."/>
            <person name="Squares S."/>
            <person name="Squares R."/>
            <person name="Sulston J.E."/>
            <person name="Taylor K."/>
            <person name="Whitehead S."/>
            <person name="Barrell B.G."/>
        </authorList>
    </citation>
    <scope>NUCLEOTIDE SEQUENCE [LARGE SCALE GENOMIC DNA]</scope>
    <source>
        <strain>ATCC 25618 / H37Rv</strain>
    </source>
</reference>
<keyword id="KW-1003">Cell membrane</keyword>
<keyword id="KW-0472">Membrane</keyword>
<keyword id="KW-1185">Reference proteome</keyword>
<keyword id="KW-0677">Repeat</keyword>
<keyword id="KW-0812">Transmembrane</keyword>
<keyword id="KW-1133">Transmembrane helix</keyword>
<name>PPE13_MYCTU</name>
<sequence>MNFMVLPPEVNSARIYAGAGPAPMLAAAVAWDGLAAELGMAAASFSLLISGLTAGPGSAWQGPAAAAMAAAAAPYLSWLNAATARAEGAAAGAKAAAAVYEAARAATAHPALVAANRNQLLSLVLSNLFGQNLPAIAATEASYEQLWAQDVAAMVGYHGGASTVASQLTPWQQLLSVLPPVVTAAPAGAVGVPAALAIPALGVENIGVGNFLGIGNIGNNNVGSGNTGDYNFGIGNIGNANLGNGNIGNANLGSGNAGFFNFGNGNDGNTNFGSGNAGFLNIGSGNEGSGNLGFGNAGDDNTGWGNSGDTNTGGFNSGDLNTGIGSPVTQGVANSGFGNTGTGHSGFFNSGNSGSGFQNLGNGSSGFGNASDTSSGFQNAGTALTRASSTWADSPRAWPIRAPSRLQVWRTRATTARECSIRVIISRVSSTGAPPQKKVGNSG</sequence>
<comment type="subcellular location">
    <subcellularLocation>
        <location evidence="2">Cell membrane</location>
        <topology evidence="2">Multi-pass membrane protein</topology>
    </subcellularLocation>
</comment>
<comment type="similarity">
    <text evidence="2">Belongs to the mycobacterial PPE family.</text>
</comment>
<organism>
    <name type="scientific">Mycobacterium tuberculosis (strain ATCC 25618 / H37Rv)</name>
    <dbReference type="NCBI Taxonomy" id="83332"/>
    <lineage>
        <taxon>Bacteria</taxon>
        <taxon>Bacillati</taxon>
        <taxon>Actinomycetota</taxon>
        <taxon>Actinomycetes</taxon>
        <taxon>Mycobacteriales</taxon>
        <taxon>Mycobacteriaceae</taxon>
        <taxon>Mycobacterium</taxon>
        <taxon>Mycobacterium tuberculosis complex</taxon>
    </lineage>
</organism>
<proteinExistence type="inferred from homology"/>
<gene>
    <name type="primary">PPE13</name>
    <name type="ordered locus">Rv0878c</name>
    <name type="ORF">MTCY31.06c</name>
</gene>
<feature type="chain" id="PRO_0000217844" description="Uncharacterized PPE family protein PPE13">
    <location>
        <begin position="1"/>
        <end position="443"/>
    </location>
</feature>
<feature type="transmembrane region" description="Helical" evidence="1">
    <location>
        <begin position="15"/>
        <end position="35"/>
    </location>
</feature>
<feature type="transmembrane region" description="Helical" evidence="1">
    <location>
        <begin position="38"/>
        <end position="58"/>
    </location>
</feature>
<feature type="transmembrane region" description="Helical" evidence="1">
    <location>
        <begin position="59"/>
        <end position="79"/>
    </location>
</feature>
<feature type="transmembrane region" description="Helical" evidence="1">
    <location>
        <begin position="181"/>
        <end position="201"/>
    </location>
</feature>
<feature type="region of interest" description="4 X 10 AA approximate repeats">
    <location>
        <begin position="231"/>
        <end position="270"/>
    </location>
</feature>
<protein>
    <recommendedName>
        <fullName>Uncharacterized PPE family protein PPE13</fullName>
    </recommendedName>
</protein>
<accession>P9WI35</accession>
<accession>L0T563</accession>
<accession>Q10540</accession>
<dbReference type="EMBL" id="AL123456">
    <property type="protein sequence ID" value="CCP43626.1"/>
    <property type="molecule type" value="Genomic_DNA"/>
</dbReference>
<dbReference type="PIR" id="C70780">
    <property type="entry name" value="C70780"/>
</dbReference>
<dbReference type="RefSeq" id="WP_003900226.1">
    <property type="nucleotide sequence ID" value="NZ_NVQJ01000001.1"/>
</dbReference>
<dbReference type="RefSeq" id="YP_177764.1">
    <property type="nucleotide sequence ID" value="NC_000962.3"/>
</dbReference>
<dbReference type="SMR" id="P9WI35"/>
<dbReference type="STRING" id="83332.Rv0878c"/>
<dbReference type="PaxDb" id="83332-Rv0878c"/>
<dbReference type="DNASU" id="885617"/>
<dbReference type="GeneID" id="885617"/>
<dbReference type="KEGG" id="mtu:Rv0878c"/>
<dbReference type="KEGG" id="mtv:RVBD_0878c"/>
<dbReference type="TubercuList" id="Rv0878c"/>
<dbReference type="eggNOG" id="COG5651">
    <property type="taxonomic scope" value="Bacteria"/>
</dbReference>
<dbReference type="InParanoid" id="P9WI35"/>
<dbReference type="OrthoDB" id="4762142at2"/>
<dbReference type="PhylomeDB" id="P9WI35"/>
<dbReference type="Proteomes" id="UP000001584">
    <property type="component" value="Chromosome"/>
</dbReference>
<dbReference type="GO" id="GO:0005886">
    <property type="term" value="C:plasma membrane"/>
    <property type="evidence" value="ECO:0007669"/>
    <property type="project" value="UniProtKB-SubCell"/>
</dbReference>
<dbReference type="GO" id="GO:0051701">
    <property type="term" value="P:biological process involved in interaction with host"/>
    <property type="evidence" value="ECO:0000315"/>
    <property type="project" value="MTBBASE"/>
</dbReference>
<dbReference type="GO" id="GO:0052572">
    <property type="term" value="P:response to host immune response"/>
    <property type="evidence" value="ECO:0000318"/>
    <property type="project" value="GO_Central"/>
</dbReference>
<dbReference type="FunFam" id="1.20.1260.20:FF:000001">
    <property type="entry name" value="PPE family protein PPE41"/>
    <property type="match status" value="1"/>
</dbReference>
<dbReference type="Gene3D" id="1.20.1260.20">
    <property type="entry name" value="PPE superfamily"/>
    <property type="match status" value="1"/>
</dbReference>
<dbReference type="InterPro" id="IPR002989">
    <property type="entry name" value="Mycobac_pentapep"/>
</dbReference>
<dbReference type="InterPro" id="IPR000030">
    <property type="entry name" value="PPE_dom"/>
</dbReference>
<dbReference type="InterPro" id="IPR038332">
    <property type="entry name" value="PPE_sf"/>
</dbReference>
<dbReference type="PANTHER" id="PTHR46766">
    <property type="entry name" value="GLUTAMINE-RICH PROTEIN 2"/>
    <property type="match status" value="1"/>
</dbReference>
<dbReference type="PANTHER" id="PTHR46766:SF1">
    <property type="entry name" value="GLUTAMINE-RICH PROTEIN 2"/>
    <property type="match status" value="1"/>
</dbReference>
<dbReference type="Pfam" id="PF01469">
    <property type="entry name" value="Pentapeptide_2"/>
    <property type="match status" value="2"/>
</dbReference>
<dbReference type="Pfam" id="PF00823">
    <property type="entry name" value="PPE"/>
    <property type="match status" value="1"/>
</dbReference>
<dbReference type="SUPFAM" id="SSF140459">
    <property type="entry name" value="PE/PPE dimer-like"/>
    <property type="match status" value="1"/>
</dbReference>